<sequence length="75" mass="8473">MAYLKKSLFLVLFLGLVSLSICEEEKREEENEEEQEDDDQSEEKRGFLDVITHVGKAVGKAALNAVTEMVNQAEQ</sequence>
<proteinExistence type="evidence at protein level"/>
<keyword id="KW-0878">Amphibian defense peptide</keyword>
<keyword id="KW-0929">Antimicrobial</keyword>
<keyword id="KW-0165">Cleavage on pair of basic residues</keyword>
<keyword id="KW-0964">Secreted</keyword>
<keyword id="KW-0732">Signal</keyword>
<name>CZS6_CRUCA</name>
<evidence type="ECO:0000250" key="1">
    <source>
        <dbReference type="UniProtKB" id="A0A193H362"/>
    </source>
</evidence>
<evidence type="ECO:0000255" key="2"/>
<evidence type="ECO:0000256" key="3">
    <source>
        <dbReference type="SAM" id="MobiDB-lite"/>
    </source>
</evidence>
<evidence type="ECO:0000269" key="4">
    <source>
    </source>
</evidence>
<evidence type="ECO:0000303" key="5">
    <source>
    </source>
</evidence>
<evidence type="ECO:0000305" key="6"/>
<evidence type="ECO:0000305" key="7">
    <source>
    </source>
</evidence>
<evidence type="ECO:0000312" key="8">
    <source>
        <dbReference type="EMBL" id="ANN87763.1"/>
    </source>
</evidence>
<dbReference type="EMBL" id="KX065083">
    <property type="protein sequence ID" value="ANN87763.1"/>
    <property type="molecule type" value="mRNA"/>
</dbReference>
<dbReference type="GO" id="GO:0005576">
    <property type="term" value="C:extracellular region"/>
    <property type="evidence" value="ECO:0007669"/>
    <property type="project" value="UniProtKB-SubCell"/>
</dbReference>
<dbReference type="GO" id="GO:0006952">
    <property type="term" value="P:defense response"/>
    <property type="evidence" value="ECO:0007669"/>
    <property type="project" value="UniProtKB-KW"/>
</dbReference>
<dbReference type="InterPro" id="IPR004275">
    <property type="entry name" value="Frog_antimicrobial_propeptide"/>
</dbReference>
<dbReference type="InterPro" id="IPR016322">
    <property type="entry name" value="FSAP"/>
</dbReference>
<dbReference type="Pfam" id="PF03032">
    <property type="entry name" value="FSAP_sig_propep"/>
    <property type="match status" value="1"/>
</dbReference>
<dbReference type="PIRSF" id="PIRSF001822">
    <property type="entry name" value="Dermaseptin_precursor"/>
    <property type="match status" value="1"/>
</dbReference>
<feature type="signal peptide" evidence="2">
    <location>
        <begin position="1"/>
        <end position="22"/>
    </location>
</feature>
<feature type="propeptide" id="PRO_0000439470" evidence="7">
    <location>
        <begin position="23"/>
        <end position="43"/>
    </location>
</feature>
<feature type="peptide" id="PRO_0000439471" description="Cruzioseptin-6" evidence="4">
    <location>
        <begin position="46"/>
        <end position="75"/>
    </location>
</feature>
<feature type="region of interest" description="Disordered" evidence="3">
    <location>
        <begin position="24"/>
        <end position="44"/>
    </location>
</feature>
<feature type="compositionally biased region" description="Acidic residues" evidence="3">
    <location>
        <begin position="30"/>
        <end position="41"/>
    </location>
</feature>
<reference evidence="8" key="1">
    <citation type="journal article" date="2016" name="J. Proteomics">
        <title>Peptidomic approach identifies cruzioseptins, a new family of potent antimicrobial peptides in the splendid leaf frog, Cruziohyla calcarifer.</title>
        <authorList>
            <person name="Proano-Bolanos C."/>
            <person name="Zhou M."/>
            <person name="Wang L."/>
            <person name="Coloma L.A."/>
            <person name="Chen T."/>
            <person name="Shaw C."/>
        </authorList>
    </citation>
    <scope>NUCLEOTIDE SEQUENCE [MRNA]</scope>
    <scope>SUBCELLULAR LOCATION</scope>
    <scope>MASS SPECTROMETRY</scope>
    <scope>IDENTIFICATION BY MASS SPECTROMETRY</scope>
    <source>
        <tissue evidence="8">Skin secretion</tissue>
    </source>
</reference>
<accession>A0A193H396</accession>
<comment type="function">
    <text evidence="1">Has antimicrobial activity.</text>
</comment>
<comment type="subcellular location">
    <subcellularLocation>
        <location evidence="4">Secreted</location>
    </subcellularLocation>
</comment>
<comment type="tissue specificity">
    <text evidence="7">Expressed by the skin glands.</text>
</comment>
<comment type="mass spectrometry" mass="3109.62" method="Electrospray" evidence="4"/>
<comment type="similarity">
    <text evidence="6">Belongs to the frog skin active peptide (FSAP) family. Cruzioseptin subfamily.</text>
</comment>
<protein>
    <recommendedName>
        <fullName evidence="5">Cruzioseptin-6</fullName>
        <shortName evidence="5">CZS-6</shortName>
    </recommendedName>
</protein>
<organism evidence="8">
    <name type="scientific">Cruziohyla calcarifer</name>
    <name type="common">Splendid leaf frog</name>
    <name type="synonym">Agalychnis calcarifer</name>
    <dbReference type="NCBI Taxonomy" id="318249"/>
    <lineage>
        <taxon>Eukaryota</taxon>
        <taxon>Metazoa</taxon>
        <taxon>Chordata</taxon>
        <taxon>Craniata</taxon>
        <taxon>Vertebrata</taxon>
        <taxon>Euteleostomi</taxon>
        <taxon>Amphibia</taxon>
        <taxon>Batrachia</taxon>
        <taxon>Anura</taxon>
        <taxon>Neobatrachia</taxon>
        <taxon>Hyloidea</taxon>
        <taxon>Hylidae</taxon>
        <taxon>Phyllomedusinae</taxon>
        <taxon>Cruziohyla</taxon>
    </lineage>
</organism>